<keyword id="KW-0963">Cytoplasm</keyword>
<keyword id="KW-0539">Nucleus</keyword>
<keyword id="KW-0647">Proteasome</keyword>
<keyword id="KW-1185">Reference proteome</keyword>
<feature type="chain" id="PRO_0000124108" description="Proteasome subunit alpha type-4">
    <location>
        <begin position="1"/>
        <end position="250"/>
    </location>
</feature>
<proteinExistence type="evidence at transcript level"/>
<name>PSA4_DICDI</name>
<dbReference type="EMBL" id="L22212">
    <property type="protein sequence ID" value="AAA33233.1"/>
    <property type="molecule type" value="mRNA"/>
</dbReference>
<dbReference type="EMBL" id="AAFI02000040">
    <property type="protein sequence ID" value="EAL66781.1"/>
    <property type="molecule type" value="Genomic_DNA"/>
</dbReference>
<dbReference type="RefSeq" id="XP_640858.1">
    <property type="nucleotide sequence ID" value="XM_635766.1"/>
</dbReference>
<dbReference type="SMR" id="P34119"/>
<dbReference type="FunCoup" id="P34119">
    <property type="interactions" value="894"/>
</dbReference>
<dbReference type="STRING" id="44689.P34119"/>
<dbReference type="MEROPS" id="T01.973"/>
<dbReference type="PaxDb" id="44689-DDB0214953"/>
<dbReference type="EnsemblProtists" id="EAL66781">
    <property type="protein sequence ID" value="EAL66781"/>
    <property type="gene ID" value="DDB_G0280969"/>
</dbReference>
<dbReference type="GeneID" id="8622914"/>
<dbReference type="KEGG" id="ddi:DDB_G0280969"/>
<dbReference type="dictyBase" id="DDB_G0280969">
    <property type="gene designation" value="psmA4"/>
</dbReference>
<dbReference type="VEuPathDB" id="AmoebaDB:DDB_G0280969"/>
<dbReference type="eggNOG" id="KOG0178">
    <property type="taxonomic scope" value="Eukaryota"/>
</dbReference>
<dbReference type="HOGENOM" id="CLU_035750_4_3_1"/>
<dbReference type="InParanoid" id="P34119"/>
<dbReference type="OMA" id="YVLNDNM"/>
<dbReference type="PhylomeDB" id="P34119"/>
<dbReference type="Reactome" id="R-DDI-1236978">
    <property type="pathway name" value="Cross-presentation of soluble exogenous antigens (endosomes)"/>
</dbReference>
<dbReference type="Reactome" id="R-DDI-174084">
    <property type="pathway name" value="Autodegradation of Cdh1 by Cdh1:APC/C"/>
</dbReference>
<dbReference type="Reactome" id="R-DDI-174154">
    <property type="pathway name" value="APC/C:Cdc20 mediated degradation of Securin"/>
</dbReference>
<dbReference type="Reactome" id="R-DDI-174178">
    <property type="pathway name" value="APC/C:Cdh1 mediated degradation of Cdc20 and other APC/C:Cdh1 targeted proteins in late mitosis/early G1"/>
</dbReference>
<dbReference type="Reactome" id="R-DDI-2467813">
    <property type="pathway name" value="Separation of Sister Chromatids"/>
</dbReference>
<dbReference type="Reactome" id="R-DDI-349425">
    <property type="pathway name" value="Autodegradation of the E3 ubiquitin ligase COP1"/>
</dbReference>
<dbReference type="Reactome" id="R-DDI-382556">
    <property type="pathway name" value="ABC-family proteins mediated transport"/>
</dbReference>
<dbReference type="Reactome" id="R-DDI-450408">
    <property type="pathway name" value="AUF1 (hnRNP D0) binds and destabilizes mRNA"/>
</dbReference>
<dbReference type="Reactome" id="R-DDI-4641258">
    <property type="pathway name" value="Degradation of DVL"/>
</dbReference>
<dbReference type="Reactome" id="R-DDI-5632684">
    <property type="pathway name" value="Hedgehog 'on' state"/>
</dbReference>
<dbReference type="Reactome" id="R-DDI-5658442">
    <property type="pathway name" value="Regulation of RAS by GAPs"/>
</dbReference>
<dbReference type="Reactome" id="R-DDI-5687128">
    <property type="pathway name" value="MAPK6/MAPK4 signaling"/>
</dbReference>
<dbReference type="Reactome" id="R-DDI-5689603">
    <property type="pathway name" value="UCH proteinases"/>
</dbReference>
<dbReference type="Reactome" id="R-DDI-5689880">
    <property type="pathway name" value="Ub-specific processing proteases"/>
</dbReference>
<dbReference type="Reactome" id="R-DDI-68949">
    <property type="pathway name" value="Orc1 removal from chromatin"/>
</dbReference>
<dbReference type="Reactome" id="R-DDI-69017">
    <property type="pathway name" value="CDK-mediated phosphorylation and removal of Cdc6"/>
</dbReference>
<dbReference type="Reactome" id="R-DDI-69601">
    <property type="pathway name" value="Ubiquitin Mediated Degradation of Phosphorylated Cdc25A"/>
</dbReference>
<dbReference type="Reactome" id="R-DDI-8854050">
    <property type="pathway name" value="FBXL7 down-regulates AURKA during mitotic entry and in early mitosis"/>
</dbReference>
<dbReference type="Reactome" id="R-DDI-8948751">
    <property type="pathway name" value="Regulation of PTEN stability and activity"/>
</dbReference>
<dbReference type="Reactome" id="R-DDI-8951664">
    <property type="pathway name" value="Neddylation"/>
</dbReference>
<dbReference type="Reactome" id="R-DDI-9755511">
    <property type="pathway name" value="KEAP1-NFE2L2 pathway"/>
</dbReference>
<dbReference type="Reactome" id="R-DDI-983168">
    <property type="pathway name" value="Antigen processing: Ubiquitination &amp; Proteasome degradation"/>
</dbReference>
<dbReference type="Reactome" id="R-DDI-9907900">
    <property type="pathway name" value="Proteasome assembly"/>
</dbReference>
<dbReference type="PRO" id="PR:P34119"/>
<dbReference type="Proteomes" id="UP000002195">
    <property type="component" value="Chromosome 3"/>
</dbReference>
<dbReference type="GO" id="GO:0005737">
    <property type="term" value="C:cytoplasm"/>
    <property type="evidence" value="ECO:0000353"/>
    <property type="project" value="dictyBase"/>
</dbReference>
<dbReference type="GO" id="GO:0005829">
    <property type="term" value="C:cytosol"/>
    <property type="evidence" value="ECO:0000318"/>
    <property type="project" value="GO_Central"/>
</dbReference>
<dbReference type="GO" id="GO:0005634">
    <property type="term" value="C:nucleus"/>
    <property type="evidence" value="ECO:0000353"/>
    <property type="project" value="dictyBase"/>
</dbReference>
<dbReference type="GO" id="GO:0019773">
    <property type="term" value="C:proteasome core complex, alpha-subunit complex"/>
    <property type="evidence" value="ECO:0000314"/>
    <property type="project" value="dictyBase"/>
</dbReference>
<dbReference type="GO" id="GO:0010498">
    <property type="term" value="P:proteasomal protein catabolic process"/>
    <property type="evidence" value="ECO:0000314"/>
    <property type="project" value="dictyBase"/>
</dbReference>
<dbReference type="GO" id="GO:0043161">
    <property type="term" value="P:proteasome-mediated ubiquitin-dependent protein catabolic process"/>
    <property type="evidence" value="ECO:0000318"/>
    <property type="project" value="GO_Central"/>
</dbReference>
<dbReference type="CDD" id="cd03752">
    <property type="entry name" value="proteasome_alpha_type_4"/>
    <property type="match status" value="1"/>
</dbReference>
<dbReference type="FunFam" id="3.60.20.10:FF:000031">
    <property type="entry name" value="Proteasome subunit alpha type"/>
    <property type="match status" value="1"/>
</dbReference>
<dbReference type="Gene3D" id="3.60.20.10">
    <property type="entry name" value="Glutamine Phosphoribosylpyrophosphate, subunit 1, domain 1"/>
    <property type="match status" value="1"/>
</dbReference>
<dbReference type="InterPro" id="IPR029055">
    <property type="entry name" value="Ntn_hydrolases_N"/>
</dbReference>
<dbReference type="InterPro" id="IPR050115">
    <property type="entry name" value="Proteasome_alpha"/>
</dbReference>
<dbReference type="InterPro" id="IPR023332">
    <property type="entry name" value="Proteasome_alpha-type"/>
</dbReference>
<dbReference type="InterPro" id="IPR000426">
    <property type="entry name" value="Proteasome_asu_N"/>
</dbReference>
<dbReference type="InterPro" id="IPR016050">
    <property type="entry name" value="Proteasome_bsu_CS"/>
</dbReference>
<dbReference type="InterPro" id="IPR001353">
    <property type="entry name" value="Proteasome_sua/b"/>
</dbReference>
<dbReference type="NCBIfam" id="NF003075">
    <property type="entry name" value="PRK03996.1"/>
    <property type="match status" value="1"/>
</dbReference>
<dbReference type="PANTHER" id="PTHR11599">
    <property type="entry name" value="PROTEASOME SUBUNIT ALPHA/BETA"/>
    <property type="match status" value="1"/>
</dbReference>
<dbReference type="Pfam" id="PF00227">
    <property type="entry name" value="Proteasome"/>
    <property type="match status" value="1"/>
</dbReference>
<dbReference type="Pfam" id="PF10584">
    <property type="entry name" value="Proteasome_A_N"/>
    <property type="match status" value="1"/>
</dbReference>
<dbReference type="SMART" id="SM00948">
    <property type="entry name" value="Proteasome_A_N"/>
    <property type="match status" value="1"/>
</dbReference>
<dbReference type="SUPFAM" id="SSF56235">
    <property type="entry name" value="N-terminal nucleophile aminohydrolases (Ntn hydrolases)"/>
    <property type="match status" value="1"/>
</dbReference>
<dbReference type="PROSITE" id="PS00388">
    <property type="entry name" value="PROTEASOME_ALPHA_1"/>
    <property type="match status" value="1"/>
</dbReference>
<dbReference type="PROSITE" id="PS51475">
    <property type="entry name" value="PROTEASOME_ALPHA_2"/>
    <property type="match status" value="1"/>
</dbReference>
<reference key="1">
    <citation type="journal article" date="1993" name="J. Struct. Biol.">
        <title>Proteasomes from Dictyostelium discoideum: characterization of structure and function.</title>
        <authorList>
            <person name="Schauer T.M."/>
            <person name="Nesper M."/>
            <person name="Kehl M."/>
            <person name="Lottspeich F."/>
            <person name="Mueller-Taubenberger A."/>
            <person name="Gerisch G."/>
            <person name="Baumeister W."/>
        </authorList>
    </citation>
    <scope>NUCLEOTIDE SEQUENCE [MRNA]</scope>
    <source>
        <strain>AX2</strain>
    </source>
</reference>
<reference key="2">
    <citation type="journal article" date="2005" name="Nature">
        <title>The genome of the social amoeba Dictyostelium discoideum.</title>
        <authorList>
            <person name="Eichinger L."/>
            <person name="Pachebat J.A."/>
            <person name="Gloeckner G."/>
            <person name="Rajandream M.A."/>
            <person name="Sucgang R."/>
            <person name="Berriman M."/>
            <person name="Song J."/>
            <person name="Olsen R."/>
            <person name="Szafranski K."/>
            <person name="Xu Q."/>
            <person name="Tunggal B."/>
            <person name="Kummerfeld S."/>
            <person name="Madera M."/>
            <person name="Konfortov B.A."/>
            <person name="Rivero F."/>
            <person name="Bankier A.T."/>
            <person name="Lehmann R."/>
            <person name="Hamlin N."/>
            <person name="Davies R."/>
            <person name="Gaudet P."/>
            <person name="Fey P."/>
            <person name="Pilcher K."/>
            <person name="Chen G."/>
            <person name="Saunders D."/>
            <person name="Sodergren E.J."/>
            <person name="Davis P."/>
            <person name="Kerhornou A."/>
            <person name="Nie X."/>
            <person name="Hall N."/>
            <person name="Anjard C."/>
            <person name="Hemphill L."/>
            <person name="Bason N."/>
            <person name="Farbrother P."/>
            <person name="Desany B."/>
            <person name="Just E."/>
            <person name="Morio T."/>
            <person name="Rost R."/>
            <person name="Churcher C.M."/>
            <person name="Cooper J."/>
            <person name="Haydock S."/>
            <person name="van Driessche N."/>
            <person name="Cronin A."/>
            <person name="Goodhead I."/>
            <person name="Muzny D.M."/>
            <person name="Mourier T."/>
            <person name="Pain A."/>
            <person name="Lu M."/>
            <person name="Harper D."/>
            <person name="Lindsay R."/>
            <person name="Hauser H."/>
            <person name="James K.D."/>
            <person name="Quiles M."/>
            <person name="Madan Babu M."/>
            <person name="Saito T."/>
            <person name="Buchrieser C."/>
            <person name="Wardroper A."/>
            <person name="Felder M."/>
            <person name="Thangavelu M."/>
            <person name="Johnson D."/>
            <person name="Knights A."/>
            <person name="Loulseged H."/>
            <person name="Mungall K.L."/>
            <person name="Oliver K."/>
            <person name="Price C."/>
            <person name="Quail M.A."/>
            <person name="Urushihara H."/>
            <person name="Hernandez J."/>
            <person name="Rabbinowitsch E."/>
            <person name="Steffen D."/>
            <person name="Sanders M."/>
            <person name="Ma J."/>
            <person name="Kohara Y."/>
            <person name="Sharp S."/>
            <person name="Simmonds M.N."/>
            <person name="Spiegler S."/>
            <person name="Tivey A."/>
            <person name="Sugano S."/>
            <person name="White B."/>
            <person name="Walker D."/>
            <person name="Woodward J.R."/>
            <person name="Winckler T."/>
            <person name="Tanaka Y."/>
            <person name="Shaulsky G."/>
            <person name="Schleicher M."/>
            <person name="Weinstock G.M."/>
            <person name="Rosenthal A."/>
            <person name="Cox E.C."/>
            <person name="Chisholm R.L."/>
            <person name="Gibbs R.A."/>
            <person name="Loomis W.F."/>
            <person name="Platzer M."/>
            <person name="Kay R.R."/>
            <person name="Williams J.G."/>
            <person name="Dear P.H."/>
            <person name="Noegel A.A."/>
            <person name="Barrell B.G."/>
            <person name="Kuspa A."/>
        </authorList>
    </citation>
    <scope>NUCLEOTIDE SEQUENCE [LARGE SCALE GENOMIC DNA]</scope>
    <source>
        <strain>AX4</strain>
    </source>
</reference>
<accession>P34119</accession>
<accession>Q54UB8</accession>
<sequence length="250" mass="28101">MARRYDQRTTIFSPEGRVYQVEYAMTAIRHAGATVGILAKDGIVLAAEKKTTAKLLDSSTSISEKMFKIDEHVVCAVAGITSDANILINYARLSSQRFFYQYQEPMPVEQLVSQICDTKQGYTQYGGLRPFGVSFLYAGWDRHYGFQLYQSDPSGNFAGWKATSIGGENSQVAQSVLRSNYKPDISLKEALQLALKVLTKTMDRSNINSEKLEFSYFTKQGDNVVYHIFTAAELDAFIKETDLEQETEDN</sequence>
<protein>
    <recommendedName>
        <fullName>Proteasome subunit alpha type-4</fullName>
    </recommendedName>
    <alternativeName>
        <fullName>Proteasome component DD4</fullName>
    </alternativeName>
</protein>
<comment type="function">
    <text>The proteasome is a multicatalytic proteinase complex which is characterized by its ability to cleave peptides with Arg, Phe, Tyr, Leu, and Glu adjacent to the leaving group at neutral or slightly basic pH. The proteasome has an ATP-dependent proteolytic activity.</text>
</comment>
<comment type="subunit">
    <text evidence="1">The 26S proteasome consists of a 20S proteasome core and two 19S regulatory subunits. The 20S proteasome core is composed of 28 subunits that are arranged in four stacked rings, resulting in a barrel-shaped structure. The two end rings are each formed by seven alpha subunits, and the two central rings are each formed by seven beta subunits. The catalytic chamber with the active sites is on the inside of the barrel (By similarity).</text>
</comment>
<comment type="subcellular location">
    <subcellularLocation>
        <location evidence="1">Cytoplasm</location>
    </subcellularLocation>
    <subcellularLocation>
        <location evidence="1">Nucleus</location>
    </subcellularLocation>
</comment>
<comment type="similarity">
    <text evidence="2">Belongs to the peptidase T1A family.</text>
</comment>
<gene>
    <name type="primary">psmA4</name>
    <name type="synonym">prdD</name>
    <name type="ORF">DDB_G0280969</name>
</gene>
<organism>
    <name type="scientific">Dictyostelium discoideum</name>
    <name type="common">Social amoeba</name>
    <dbReference type="NCBI Taxonomy" id="44689"/>
    <lineage>
        <taxon>Eukaryota</taxon>
        <taxon>Amoebozoa</taxon>
        <taxon>Evosea</taxon>
        <taxon>Eumycetozoa</taxon>
        <taxon>Dictyostelia</taxon>
        <taxon>Dictyosteliales</taxon>
        <taxon>Dictyosteliaceae</taxon>
        <taxon>Dictyostelium</taxon>
    </lineage>
</organism>
<evidence type="ECO:0000250" key="1"/>
<evidence type="ECO:0000255" key="2">
    <source>
        <dbReference type="PROSITE-ProRule" id="PRU00808"/>
    </source>
</evidence>